<comment type="function">
    <text>Virulence factor; cleaves host immunoglobulin A producing intact Fc and Fab fragments.</text>
</comment>
<comment type="catalytic activity">
    <reaction>
        <text>Cleavage of immunoglobulin A molecules at certain Pro-|-Xaa bonds in the hinge region. No small molecule substrates are known.</text>
        <dbReference type="EC" id="3.4.21.72"/>
    </reaction>
</comment>
<comment type="subcellular location">
    <molecule>Immunoglobulin A1 protease autotransporter</molecule>
    <subcellularLocation>
        <location evidence="1">Periplasm</location>
    </subcellularLocation>
</comment>
<comment type="subcellular location">
    <molecule>Immunoglobulin A1 protease</molecule>
    <subcellularLocation>
        <location>Secreted</location>
    </subcellularLocation>
    <subcellularLocation>
        <location>Cell surface</location>
    </subcellularLocation>
</comment>
<comment type="subcellular location">
    <molecule>Immunoglobulin A1 protease translocator</molecule>
    <subcellularLocation>
        <location evidence="1">Cell outer membrane</location>
        <topology evidence="1">Multi-pass membrane protein</topology>
    </subcellularLocation>
    <text evidence="1">The cleaved C-terminal fragment (autotransporter domain) is localized in the outer membrane.</text>
</comment>
<comment type="domain">
    <text evidence="1">The signal peptide, cleaved at the inner membrane, guides the autotransporter protein to the periplasmic space. Then, insertion of the C-terminal translocator domain in the outer membrane forms a hydrophilic pore for the translocation of the passenger domain to the bacterial cell surface, with subsequent cleavage (By similarity).</text>
</comment>
<evidence type="ECO:0000250" key="1"/>
<evidence type="ECO:0000255" key="2"/>
<evidence type="ECO:0000255" key="3">
    <source>
        <dbReference type="PROSITE-ProRule" id="PRU00556"/>
    </source>
</evidence>
<evidence type="ECO:0000255" key="4">
    <source>
        <dbReference type="PROSITE-ProRule" id="PRU01028"/>
    </source>
</evidence>
<evidence type="ECO:0000256" key="5">
    <source>
        <dbReference type="SAM" id="MobiDB-lite"/>
    </source>
</evidence>
<evidence type="ECO:0000305" key="6"/>
<accession>P45386</accession>
<keyword id="KW-0998">Cell outer membrane</keyword>
<keyword id="KW-0378">Hydrolase</keyword>
<keyword id="KW-0472">Membrane</keyword>
<keyword id="KW-0574">Periplasm</keyword>
<keyword id="KW-0645">Protease</keyword>
<keyword id="KW-0964">Secreted</keyword>
<keyword id="KW-0720">Serine protease</keyword>
<keyword id="KW-0732">Signal</keyword>
<keyword id="KW-0812">Transmembrane</keyword>
<keyword id="KW-1134">Transmembrane beta strand</keyword>
<keyword id="KW-0843">Virulence</keyword>
<keyword id="KW-0865">Zymogen</keyword>
<organism>
    <name type="scientific">Haemophilus influenzae</name>
    <dbReference type="NCBI Taxonomy" id="727"/>
    <lineage>
        <taxon>Bacteria</taxon>
        <taxon>Pseudomonadati</taxon>
        <taxon>Pseudomonadota</taxon>
        <taxon>Gammaproteobacteria</taxon>
        <taxon>Pasteurellales</taxon>
        <taxon>Pasteurellaceae</taxon>
        <taxon>Haemophilus</taxon>
    </lineage>
</organism>
<proteinExistence type="inferred from homology"/>
<feature type="signal peptide" evidence="2">
    <location>
        <begin position="1"/>
        <end position="25"/>
    </location>
</feature>
<feature type="chain" id="PRO_0000387602" description="Immunoglobulin A1 protease autotransporter">
    <location>
        <begin position="26"/>
        <end position="1849"/>
    </location>
</feature>
<feature type="chain" id="PRO_0000026966" description="Immunoglobulin A1 protease">
    <location>
        <begin position="26"/>
        <end position="1021"/>
    </location>
</feature>
<feature type="chain" id="PRO_0000026967" description="Immunoglobulin A1 protease translocator" evidence="2">
    <location>
        <begin position="1022"/>
        <end position="1849"/>
    </location>
</feature>
<feature type="domain" description="Peptidase S6" evidence="4">
    <location>
        <begin position="26"/>
        <end position="343"/>
    </location>
</feature>
<feature type="domain" description="Autotransporter" evidence="3">
    <location>
        <begin position="1597"/>
        <end position="1849"/>
    </location>
</feature>
<feature type="region of interest" description="Disordered" evidence="5">
    <location>
        <begin position="998"/>
        <end position="1538"/>
    </location>
</feature>
<feature type="compositionally biased region" description="Polar residues" evidence="5">
    <location>
        <begin position="1004"/>
        <end position="1015"/>
    </location>
</feature>
<feature type="compositionally biased region" description="Low complexity" evidence="5">
    <location>
        <begin position="1066"/>
        <end position="1077"/>
    </location>
</feature>
<feature type="compositionally biased region" description="Polar residues" evidence="5">
    <location>
        <begin position="1079"/>
        <end position="1097"/>
    </location>
</feature>
<feature type="compositionally biased region" description="Polar residues" evidence="5">
    <location>
        <begin position="1138"/>
        <end position="1151"/>
    </location>
</feature>
<feature type="compositionally biased region" description="Basic and acidic residues" evidence="5">
    <location>
        <begin position="1152"/>
        <end position="1166"/>
    </location>
</feature>
<feature type="compositionally biased region" description="Polar residues" evidence="5">
    <location>
        <begin position="1167"/>
        <end position="1184"/>
    </location>
</feature>
<feature type="compositionally biased region" description="Basic and acidic residues" evidence="5">
    <location>
        <begin position="1185"/>
        <end position="1205"/>
    </location>
</feature>
<feature type="compositionally biased region" description="Polar residues" evidence="5">
    <location>
        <begin position="1237"/>
        <end position="1268"/>
    </location>
</feature>
<feature type="compositionally biased region" description="Basic and acidic residues" evidence="5">
    <location>
        <begin position="1291"/>
        <end position="1301"/>
    </location>
</feature>
<feature type="compositionally biased region" description="Low complexity" evidence="5">
    <location>
        <begin position="1314"/>
        <end position="1330"/>
    </location>
</feature>
<feature type="compositionally biased region" description="Low complexity" evidence="5">
    <location>
        <begin position="1345"/>
        <end position="1361"/>
    </location>
</feature>
<feature type="compositionally biased region" description="Low complexity" evidence="5">
    <location>
        <begin position="1369"/>
        <end position="1381"/>
    </location>
</feature>
<feature type="compositionally biased region" description="Polar residues" evidence="5">
    <location>
        <begin position="1388"/>
        <end position="1437"/>
    </location>
</feature>
<feature type="compositionally biased region" description="Basic and acidic residues" evidence="5">
    <location>
        <begin position="1438"/>
        <end position="1457"/>
    </location>
</feature>
<feature type="compositionally biased region" description="Low complexity" evidence="5">
    <location>
        <begin position="1493"/>
        <end position="1513"/>
    </location>
</feature>
<feature type="active site" evidence="6">
    <location>
        <position position="299"/>
    </location>
</feature>
<dbReference type="EC" id="3.4.21.72"/>
<dbReference type="EMBL" id="M87491">
    <property type="protein sequence ID" value="AAA24968.1"/>
    <property type="molecule type" value="Genomic_DNA"/>
</dbReference>
<dbReference type="PIR" id="C41859">
    <property type="entry name" value="C41859"/>
</dbReference>
<dbReference type="SMR" id="P45386"/>
<dbReference type="MEROPS" id="S06.007"/>
<dbReference type="GO" id="GO:0009279">
    <property type="term" value="C:cell outer membrane"/>
    <property type="evidence" value="ECO:0007669"/>
    <property type="project" value="UniProtKB-SubCell"/>
</dbReference>
<dbReference type="GO" id="GO:0009986">
    <property type="term" value="C:cell surface"/>
    <property type="evidence" value="ECO:0007669"/>
    <property type="project" value="UniProtKB-SubCell"/>
</dbReference>
<dbReference type="GO" id="GO:0005576">
    <property type="term" value="C:extracellular region"/>
    <property type="evidence" value="ECO:0007669"/>
    <property type="project" value="UniProtKB-SubCell"/>
</dbReference>
<dbReference type="GO" id="GO:0042597">
    <property type="term" value="C:periplasmic space"/>
    <property type="evidence" value="ECO:0007669"/>
    <property type="project" value="UniProtKB-SubCell"/>
</dbReference>
<dbReference type="GO" id="GO:0004252">
    <property type="term" value="F:serine-type endopeptidase activity"/>
    <property type="evidence" value="ECO:0007669"/>
    <property type="project" value="InterPro"/>
</dbReference>
<dbReference type="GO" id="GO:0006508">
    <property type="term" value="P:proteolysis"/>
    <property type="evidence" value="ECO:0007669"/>
    <property type="project" value="UniProtKB-KW"/>
</dbReference>
<dbReference type="CDD" id="cd01343">
    <property type="entry name" value="PL1_Passenger_AT"/>
    <property type="match status" value="1"/>
</dbReference>
<dbReference type="Gene3D" id="2.160.20.20">
    <property type="match status" value="1"/>
</dbReference>
<dbReference type="Gene3D" id="2.40.10.120">
    <property type="match status" value="1"/>
</dbReference>
<dbReference type="Gene3D" id="3.30.160.280">
    <property type="match status" value="1"/>
</dbReference>
<dbReference type="Gene3D" id="4.10.1240.40">
    <property type="match status" value="1"/>
</dbReference>
<dbReference type="Gene3D" id="2.40.128.130">
    <property type="entry name" value="Autotransporter beta-domain"/>
    <property type="match status" value="1"/>
</dbReference>
<dbReference type="InterPro" id="IPR005546">
    <property type="entry name" value="Autotransporte_beta"/>
</dbReference>
<dbReference type="InterPro" id="IPR036709">
    <property type="entry name" value="Autotransporte_beta_dom_sf"/>
</dbReference>
<dbReference type="InterPro" id="IPR012332">
    <property type="entry name" value="Autotransporter_pectin_lyase_C"/>
</dbReference>
<dbReference type="InterPro" id="IPR050909">
    <property type="entry name" value="Bact_Autotransporter_VF"/>
</dbReference>
<dbReference type="InterPro" id="IPR011050">
    <property type="entry name" value="Pectin_lyase_fold/virulence"/>
</dbReference>
<dbReference type="InterPro" id="IPR000710">
    <property type="entry name" value="Peptidase_S6"/>
</dbReference>
<dbReference type="InterPro" id="IPR030396">
    <property type="entry name" value="Peptidase_S6_dom"/>
</dbReference>
<dbReference type="InterPro" id="IPR004899">
    <property type="entry name" value="Pertactin_central"/>
</dbReference>
<dbReference type="PANTHER" id="PTHR12338">
    <property type="entry name" value="AUTOTRANSPORTER"/>
    <property type="match status" value="1"/>
</dbReference>
<dbReference type="PANTHER" id="PTHR12338:SF9">
    <property type="entry name" value="IMMUNOGLOBULIN A1 PROTEASE AUTOTRANSPORTER"/>
    <property type="match status" value="1"/>
</dbReference>
<dbReference type="Pfam" id="PF03797">
    <property type="entry name" value="Autotransporter"/>
    <property type="match status" value="1"/>
</dbReference>
<dbReference type="Pfam" id="PF24078">
    <property type="entry name" value="Beta-sol_PIC_HAP1_IgA0_2nd"/>
    <property type="match status" value="1"/>
</dbReference>
<dbReference type="Pfam" id="PF24077">
    <property type="entry name" value="IgA0_D2"/>
    <property type="match status" value="1"/>
</dbReference>
<dbReference type="Pfam" id="PF02395">
    <property type="entry name" value="Peptidase_S6"/>
    <property type="match status" value="1"/>
</dbReference>
<dbReference type="Pfam" id="PF03212">
    <property type="entry name" value="Pertactin"/>
    <property type="match status" value="1"/>
</dbReference>
<dbReference type="PRINTS" id="PR00921">
    <property type="entry name" value="IGASERPTASE"/>
</dbReference>
<dbReference type="SMART" id="SM00869">
    <property type="entry name" value="Autotransporter"/>
    <property type="match status" value="1"/>
</dbReference>
<dbReference type="SUPFAM" id="SSF103515">
    <property type="entry name" value="Autotransporter"/>
    <property type="match status" value="1"/>
</dbReference>
<dbReference type="SUPFAM" id="SSF51126">
    <property type="entry name" value="Pectin lyase-like"/>
    <property type="match status" value="1"/>
</dbReference>
<dbReference type="PROSITE" id="PS51208">
    <property type="entry name" value="AUTOTRANSPORTER"/>
    <property type="match status" value="1"/>
</dbReference>
<dbReference type="PROSITE" id="PS51691">
    <property type="entry name" value="PEPTIDASE_S6"/>
    <property type="match status" value="1"/>
</dbReference>
<gene>
    <name type="primary">iga</name>
</gene>
<sequence length="1849" mass="202957">MLNKKFKLNFIALTVAYALTPYTEAALVRDDVDYQIFRDFAENKGKFSVGATNVEVRDKKNQSLGSALPNGIPMIDFSVVDVDKRIATLVNPQYVVGVKHVSNGVSELHFGNLNGNMNNGNAKSHRDVSSEENRYYTVEKNNFPTENVTSFTTKEEQDAQKRREDYYMPRLDKFVTEVAPIEASTANNNKGEYNNSDKYPAFVRLGSGSQFIYKKGSRYQLILTEKDKQGNLLRNWDVGGDNLELVGNAYTYGIAGTPYKVNHENNGLIGFGNSKEEHSDPKGILSQDPLTNYAVLGDSGSPLFVYDREKGKWLFLGSYDFWAGYNKKSWQEWNIYKHEFAEKIYQQYSAGSLTGSNTQYTWQATGSTSTITGGGEPLSVDLTDGKDKPNHGKSITLKGSGTLTLNNHIDQGAGGLFFEGDYEVKGTSDSTTWKGAGVSVADGKTVTWKVHNPKYDRLAKIGKGTLVVEGKGKNEGLLKVGDGTVILKQKADANNKVQAFSQVGIVSGRSTLVLNDDKQVDPNSIYFGFRGGRLDLNGNSLTFDHIRNIDDGARVVNHNMTNTSNITITGESLITNPNTITSYNIEAQDDDHPLRIRSIPYRQLYFNQDNRSYYTLKKGASTRSELPQNSGESNENWLYMGRTSDEAKRNVMNHINNERMNGFNGYFGEEETKATQNGKLNVTFNGKSDQNRFLLTGGTNLNGDLNVEKGTLFLSGRPTPHARDIAGISSTKKDPHFTENNEVVVEDDWINRNFKATTMNVTGNASLYSGRNVANITSNITASNNAQVHIGYKTGDTVCVRSDYTGYVTCHNSNLSEKALNSFNPTNLRGNVNLTENASFTLGKANLFGTIQSIGTSQVNLKENSHWHLTGNSNVNQLNLTNGHIHLNAQNDANKVTTYNTLTVNSLSGNGSFYYWVDFTNNKSNKVVVNKSATGNFTLQVADKTGEPNHNELTLFDASNATRNNLEVTLANGSVDRGAWKYKLRNVNGRYDLYNPEVEKRNQTVDTTNITTPNDIQADAPSAQSNNEEIARVETPVPPPAPATESAIASEQPETRPAETAQPAMEETNTANSTETAPKSDTATQTENPNSESVPSETTEKVAENPPQENETVAKNEQEATEPTPQNGEVAKEDQPTVEANTQTNEATQSEGKTEETQTAETKSEPTESVTVSENQPEKTVSQSTEDKVVVEKEEKAKVETEETQKAPQVTSKEPPKQAEPAPEEVPTDTNAEEAQALQQTQPTTVAAAETTSPNSKPAEETQQPSEKTNAEPVTPVVSENTATQPTETEETAKVEKEKTQEVPQVASQESPKQEQPAAKPQAQTKPQAEPARENVLTTKNVGEPQPQAQPQTQSTAVPTTGETAANSKPAAKPQAQAKPQTEPARENVSTVNTKEPQSQTSATVSTEQPAKETSSNVEQPAPENSINTGSATTMTETAEKSDKPQMETVTENDRQPEANTVADNSVANNSESSESKSRRRRSVSQPKETSAEETTVASTQETTVDNSVSTPKPRSRRTRRSVQTNSYEPVELPTENAENAENVQSGNNVANSQPALRNLTSKNTNAVLSNAMAKAQFVALNVGKAVSQHISQLEMNNEGQYNVWISNTSMNKNYSSEQYRRFSSKSTQTQLGWDQTISNNVQLGGVFTYVRNSNNFDKASSKNTLAQVNFYSKYYADNHWYLGIDLGYGKFQSNLQTNNNAKFARHTAQIGLTAGKAFNLGNFAVKPTVGVRYSYLSNADFALAQDRIKVNPISVKTAFAQVDLSYTYHLGEFSITPILSARYDANQGNGKINVSVYDFAYNVENQQQYNAGLKLKYHNVKLSLIGGLTKAKQAEKQKTAEVKLSFSF</sequence>
<name>IGA4_HAEIF</name>
<protein>
    <recommendedName>
        <fullName>Immunoglobulin A1 protease autotransporter</fullName>
        <ecNumber>3.4.21.72</ecNumber>
    </recommendedName>
    <component>
        <recommendedName>
            <fullName>Immunoglobulin A1 protease</fullName>
            <shortName>IGA1 protease</shortName>
        </recommendedName>
    </component>
    <component>
        <recommendedName>
            <fullName>Immunoglobulin A1 protease translocator</fullName>
        </recommendedName>
        <alternativeName>
            <fullName>Helper peptide</fullName>
        </alternativeName>
    </component>
</protein>
<reference key="1">
    <citation type="journal article" date="1992" name="J. Bacteriol.">
        <title>A comparative genetic study of serologically distinct Haemophilus influenzae type 1 immunoglobulin A1 proteases.</title>
        <authorList>
            <person name="Poulsen K."/>
            <person name="Reinholdt J."/>
            <person name="Kilian M."/>
        </authorList>
    </citation>
    <scope>NUCLEOTIDE SEQUENCE [GENOMIC DNA]</scope>
    <source>
        <strain>NHTI HK61</strain>
    </source>
</reference>